<feature type="propeptide" id="PRO_0000031353" evidence="1">
    <location>
        <begin position="1"/>
        <end position="2"/>
    </location>
</feature>
<feature type="chain" id="PRO_0000031354" description="Ribulose bisphosphate carboxylase large chain">
    <location>
        <begin position="3"/>
        <end position="475"/>
    </location>
</feature>
<feature type="active site" description="Proton acceptor" evidence="1">
    <location>
        <position position="175"/>
    </location>
</feature>
<feature type="active site" description="Proton acceptor" evidence="1">
    <location>
        <position position="294"/>
    </location>
</feature>
<feature type="binding site" description="in homodimeric partner" evidence="1">
    <location>
        <position position="123"/>
    </location>
    <ligand>
        <name>substrate</name>
    </ligand>
</feature>
<feature type="binding site" evidence="1">
    <location>
        <position position="173"/>
    </location>
    <ligand>
        <name>substrate</name>
    </ligand>
</feature>
<feature type="binding site" evidence="1">
    <location>
        <position position="177"/>
    </location>
    <ligand>
        <name>substrate</name>
    </ligand>
</feature>
<feature type="binding site" description="via carbamate group" evidence="1">
    <location>
        <position position="201"/>
    </location>
    <ligand>
        <name>Mg(2+)</name>
        <dbReference type="ChEBI" id="CHEBI:18420"/>
    </ligand>
</feature>
<feature type="binding site" evidence="1">
    <location>
        <position position="203"/>
    </location>
    <ligand>
        <name>Mg(2+)</name>
        <dbReference type="ChEBI" id="CHEBI:18420"/>
    </ligand>
</feature>
<feature type="binding site" evidence="1">
    <location>
        <position position="204"/>
    </location>
    <ligand>
        <name>Mg(2+)</name>
        <dbReference type="ChEBI" id="CHEBI:18420"/>
    </ligand>
</feature>
<feature type="binding site" evidence="1">
    <location>
        <position position="295"/>
    </location>
    <ligand>
        <name>substrate</name>
    </ligand>
</feature>
<feature type="binding site" evidence="1">
    <location>
        <position position="327"/>
    </location>
    <ligand>
        <name>substrate</name>
    </ligand>
</feature>
<feature type="binding site" evidence="1">
    <location>
        <position position="379"/>
    </location>
    <ligand>
        <name>substrate</name>
    </ligand>
</feature>
<feature type="site" description="Transition state stabilizer" evidence="1">
    <location>
        <position position="334"/>
    </location>
</feature>
<feature type="modified residue" description="N-acetylproline" evidence="1">
    <location>
        <position position="3"/>
    </location>
</feature>
<feature type="modified residue" description="N6,N6,N6-trimethyllysine" evidence="1">
    <location>
        <position position="14"/>
    </location>
</feature>
<feature type="modified residue" description="N6-carboxylysine" evidence="1">
    <location>
        <position position="201"/>
    </location>
</feature>
<feature type="disulfide bond" description="Interchain; in linked form" evidence="1">
    <location>
        <position position="247"/>
    </location>
</feature>
<keyword id="KW-0007">Acetylation</keyword>
<keyword id="KW-0113">Calvin cycle</keyword>
<keyword id="KW-0120">Carbon dioxide fixation</keyword>
<keyword id="KW-0150">Chloroplast</keyword>
<keyword id="KW-1015">Disulfide bond</keyword>
<keyword id="KW-0456">Lyase</keyword>
<keyword id="KW-0460">Magnesium</keyword>
<keyword id="KW-0479">Metal-binding</keyword>
<keyword id="KW-0488">Methylation</keyword>
<keyword id="KW-0503">Monooxygenase</keyword>
<keyword id="KW-0560">Oxidoreductase</keyword>
<keyword id="KW-0601">Photorespiration</keyword>
<keyword id="KW-0602">Photosynthesis</keyword>
<keyword id="KW-0934">Plastid</keyword>
<evidence type="ECO:0000255" key="1">
    <source>
        <dbReference type="HAMAP-Rule" id="MF_01338"/>
    </source>
</evidence>
<sequence length="475" mass="52680">MSPKTETKASVGFKAGVKDYRLTYYTPEYQTKDTDILAAFRVTPQPGVPPEEAGAAVAAESSTGTWTTVWTDGLTSLDRYKGRCYDIEPVPGEESQFIAYVAYPLDLFEEGSVTNLFTSIVGNVFGFKALRALRLEDLRIPPAYSKTFQGPPHGIQVERDKLNKYGRPLLGCTIKPKLGLSAKNYGRAVYECLRGGLDFTKDDENVNSQPFMRWRDRFVFCAEAIYKAQAETGEIKGHYLNATAGTCEEMMKRAIFARELGVPIVMHDYLTGGFTANTSLAHYCRDNGLLLHIHRAMHAVIDRQKNHGMHFRVLAKALRMSGGDHIHAGTVVGKLEGERDVTLGFVDLLRDDFIEKDRSRGIYFTQDWVSMPGVLPVASGGIHVWHMPALTEIFGDDSVLQFGGGTLGHPWGNAPGAVANRVALEACVQARNEGRDLAREGNEVIREASKWSPELAAACEIWKEIKFEFEAMDTL</sequence>
<organism>
    <name type="scientific">Picea sitchensis</name>
    <name type="common">Sitka spruce</name>
    <name type="synonym">Pinus sitchensis</name>
    <dbReference type="NCBI Taxonomy" id="3332"/>
    <lineage>
        <taxon>Eukaryota</taxon>
        <taxon>Viridiplantae</taxon>
        <taxon>Streptophyta</taxon>
        <taxon>Embryophyta</taxon>
        <taxon>Tracheophyta</taxon>
        <taxon>Spermatophyta</taxon>
        <taxon>Pinopsida</taxon>
        <taxon>Pinidae</taxon>
        <taxon>Conifers I</taxon>
        <taxon>Pinales</taxon>
        <taxon>Pinaceae</taxon>
        <taxon>Picea</taxon>
    </lineage>
</organism>
<proteinExistence type="inferred from homology"/>
<comment type="function">
    <text evidence="1">RuBisCO catalyzes two reactions: the carboxylation of D-ribulose 1,5-bisphosphate, the primary event in carbon dioxide fixation, as well as the oxidative fragmentation of the pentose substrate in the photorespiration process. Both reactions occur simultaneously and in competition at the same active site.</text>
</comment>
<comment type="catalytic activity">
    <reaction evidence="1">
        <text>2 (2R)-3-phosphoglycerate + 2 H(+) = D-ribulose 1,5-bisphosphate + CO2 + H2O</text>
        <dbReference type="Rhea" id="RHEA:23124"/>
        <dbReference type="ChEBI" id="CHEBI:15377"/>
        <dbReference type="ChEBI" id="CHEBI:15378"/>
        <dbReference type="ChEBI" id="CHEBI:16526"/>
        <dbReference type="ChEBI" id="CHEBI:57870"/>
        <dbReference type="ChEBI" id="CHEBI:58272"/>
        <dbReference type="EC" id="4.1.1.39"/>
    </reaction>
</comment>
<comment type="catalytic activity">
    <reaction evidence="1">
        <text>D-ribulose 1,5-bisphosphate + O2 = 2-phosphoglycolate + (2R)-3-phosphoglycerate + 2 H(+)</text>
        <dbReference type="Rhea" id="RHEA:36631"/>
        <dbReference type="ChEBI" id="CHEBI:15378"/>
        <dbReference type="ChEBI" id="CHEBI:15379"/>
        <dbReference type="ChEBI" id="CHEBI:57870"/>
        <dbReference type="ChEBI" id="CHEBI:58033"/>
        <dbReference type="ChEBI" id="CHEBI:58272"/>
    </reaction>
</comment>
<comment type="cofactor">
    <cofactor evidence="1">
        <name>Mg(2+)</name>
        <dbReference type="ChEBI" id="CHEBI:18420"/>
    </cofactor>
    <text evidence="1">Binds 1 Mg(2+) ion per subunit.</text>
</comment>
<comment type="subunit">
    <text evidence="1">Heterohexadecamer of 8 large chains and 8 small chains; disulfide-linked. The disulfide link is formed within the large subunit homodimers.</text>
</comment>
<comment type="subcellular location">
    <subcellularLocation>
        <location>Plastid</location>
        <location>Chloroplast</location>
    </subcellularLocation>
</comment>
<comment type="PTM">
    <text evidence="1">The disulfide bond which can form in the large chain dimeric partners within the hexadecamer appears to be associated with oxidative stress and protein turnover.</text>
</comment>
<comment type="miscellaneous">
    <text evidence="1">The basic functional RuBisCO is composed of a large chain homodimer in a 'head-to-tail' conformation. In form I RuBisCO this homodimer is arranged in a barrel-like tetramer with the small subunits forming a tetrameric 'cap' on each end of the 'barrel'.</text>
</comment>
<comment type="similarity">
    <text evidence="1">Belongs to the RuBisCO large chain family. Type I subfamily.</text>
</comment>
<geneLocation type="chloroplast"/>
<accession>P26961</accession>
<reference key="1">
    <citation type="submission" date="1992-01" db="EMBL/GenBank/DDBJ databases">
        <authorList>
            <person name="Doerksen A.H."/>
            <person name="Strauss S."/>
            <person name="Price R."/>
        </authorList>
    </citation>
    <scope>NUCLEOTIDE SEQUENCE [GENOMIC DNA]</scope>
</reference>
<protein>
    <recommendedName>
        <fullName evidence="1">Ribulose bisphosphate carboxylase large chain</fullName>
        <shortName evidence="1">RuBisCO large subunit</shortName>
        <ecNumber evidence="1">4.1.1.39</ecNumber>
    </recommendedName>
</protein>
<dbReference type="EC" id="4.1.1.39" evidence="1"/>
<dbReference type="EMBL" id="X63660">
    <property type="protein sequence ID" value="CAA45200.1"/>
    <property type="molecule type" value="Genomic_DNA"/>
</dbReference>
<dbReference type="PIR" id="S19222">
    <property type="entry name" value="RKJQLK"/>
</dbReference>
<dbReference type="SMR" id="P26961"/>
<dbReference type="GO" id="GO:0009507">
    <property type="term" value="C:chloroplast"/>
    <property type="evidence" value="ECO:0007669"/>
    <property type="project" value="UniProtKB-SubCell"/>
</dbReference>
<dbReference type="GO" id="GO:0000287">
    <property type="term" value="F:magnesium ion binding"/>
    <property type="evidence" value="ECO:0007669"/>
    <property type="project" value="UniProtKB-UniRule"/>
</dbReference>
<dbReference type="GO" id="GO:0004497">
    <property type="term" value="F:monooxygenase activity"/>
    <property type="evidence" value="ECO:0007669"/>
    <property type="project" value="UniProtKB-KW"/>
</dbReference>
<dbReference type="GO" id="GO:0016984">
    <property type="term" value="F:ribulose-bisphosphate carboxylase activity"/>
    <property type="evidence" value="ECO:0007669"/>
    <property type="project" value="UniProtKB-UniRule"/>
</dbReference>
<dbReference type="GO" id="GO:0009853">
    <property type="term" value="P:photorespiration"/>
    <property type="evidence" value="ECO:0007669"/>
    <property type="project" value="UniProtKB-KW"/>
</dbReference>
<dbReference type="GO" id="GO:0019253">
    <property type="term" value="P:reductive pentose-phosphate cycle"/>
    <property type="evidence" value="ECO:0007669"/>
    <property type="project" value="UniProtKB-UniRule"/>
</dbReference>
<dbReference type="CDD" id="cd08212">
    <property type="entry name" value="RuBisCO_large_I"/>
    <property type="match status" value="1"/>
</dbReference>
<dbReference type="FunFam" id="3.20.20.110:FF:000001">
    <property type="entry name" value="Ribulose bisphosphate carboxylase large chain"/>
    <property type="match status" value="1"/>
</dbReference>
<dbReference type="FunFam" id="3.30.70.150:FF:000001">
    <property type="entry name" value="Ribulose bisphosphate carboxylase large chain"/>
    <property type="match status" value="1"/>
</dbReference>
<dbReference type="Gene3D" id="3.20.20.110">
    <property type="entry name" value="Ribulose bisphosphate carboxylase, large subunit, C-terminal domain"/>
    <property type="match status" value="1"/>
</dbReference>
<dbReference type="Gene3D" id="3.30.70.150">
    <property type="entry name" value="RuBisCO large subunit, N-terminal domain"/>
    <property type="match status" value="1"/>
</dbReference>
<dbReference type="HAMAP" id="MF_01338">
    <property type="entry name" value="RuBisCO_L_type1"/>
    <property type="match status" value="1"/>
</dbReference>
<dbReference type="InterPro" id="IPR033966">
    <property type="entry name" value="RuBisCO"/>
</dbReference>
<dbReference type="InterPro" id="IPR020878">
    <property type="entry name" value="RuBisCo_large_chain_AS"/>
</dbReference>
<dbReference type="InterPro" id="IPR000685">
    <property type="entry name" value="RuBisCO_lsu_C"/>
</dbReference>
<dbReference type="InterPro" id="IPR036376">
    <property type="entry name" value="RuBisCO_lsu_C_sf"/>
</dbReference>
<dbReference type="InterPro" id="IPR017443">
    <property type="entry name" value="RuBisCO_lsu_fd_N"/>
</dbReference>
<dbReference type="InterPro" id="IPR036422">
    <property type="entry name" value="RuBisCO_lsu_N_sf"/>
</dbReference>
<dbReference type="InterPro" id="IPR020888">
    <property type="entry name" value="RuBisCO_lsuI"/>
</dbReference>
<dbReference type="NCBIfam" id="NF003252">
    <property type="entry name" value="PRK04208.1"/>
    <property type="match status" value="1"/>
</dbReference>
<dbReference type="PANTHER" id="PTHR42704">
    <property type="entry name" value="RIBULOSE BISPHOSPHATE CARBOXYLASE"/>
    <property type="match status" value="1"/>
</dbReference>
<dbReference type="PANTHER" id="PTHR42704:SF15">
    <property type="entry name" value="RIBULOSE BISPHOSPHATE CARBOXYLASE LARGE CHAIN"/>
    <property type="match status" value="1"/>
</dbReference>
<dbReference type="Pfam" id="PF00016">
    <property type="entry name" value="RuBisCO_large"/>
    <property type="match status" value="1"/>
</dbReference>
<dbReference type="Pfam" id="PF02788">
    <property type="entry name" value="RuBisCO_large_N"/>
    <property type="match status" value="1"/>
</dbReference>
<dbReference type="SFLD" id="SFLDG01052">
    <property type="entry name" value="RuBisCO"/>
    <property type="match status" value="1"/>
</dbReference>
<dbReference type="SFLD" id="SFLDS00014">
    <property type="entry name" value="RuBisCO"/>
    <property type="match status" value="1"/>
</dbReference>
<dbReference type="SFLD" id="SFLDG00301">
    <property type="entry name" value="RuBisCO-like_proteins"/>
    <property type="match status" value="1"/>
</dbReference>
<dbReference type="SUPFAM" id="SSF51649">
    <property type="entry name" value="RuBisCo, C-terminal domain"/>
    <property type="match status" value="1"/>
</dbReference>
<dbReference type="SUPFAM" id="SSF54966">
    <property type="entry name" value="RuBisCO, large subunit, small (N-terminal) domain"/>
    <property type="match status" value="1"/>
</dbReference>
<dbReference type="PROSITE" id="PS00157">
    <property type="entry name" value="RUBISCO_LARGE"/>
    <property type="match status" value="1"/>
</dbReference>
<gene>
    <name evidence="1" type="primary">rbcL</name>
</gene>
<name>RBL_PICSI</name>